<protein>
    <recommendedName>
        <fullName>Synapse differentiation-inducing gene protein 1-like</fullName>
    </recommendedName>
    <alternativeName>
        <fullName>Capucin</fullName>
    </alternativeName>
    <alternativeName>
        <fullName>Dispanin subfamily C member 1</fullName>
        <shortName>DSPC1</shortName>
    </alternativeName>
    <alternativeName>
        <fullName>Transmembrane protein 90A</fullName>
    </alternativeName>
</protein>
<proteinExistence type="evidence at transcript level"/>
<comment type="subcellular location">
    <subcellularLocation>
        <location evidence="4">Membrane</location>
        <topology evidence="4">Multi-pass membrane protein</topology>
    </subcellularLocation>
    <subcellularLocation>
        <location evidence="1">Golgi apparatus</location>
        <location evidence="1">cis-Golgi network</location>
    </subcellularLocation>
</comment>
<comment type="similarity">
    <text evidence="4">Belongs to the CD225/Dispanin family.</text>
</comment>
<accession>A4IFJ1</accession>
<dbReference type="EMBL" id="BC134605">
    <property type="protein sequence ID" value="AAI34606.1"/>
    <property type="molecule type" value="mRNA"/>
</dbReference>
<dbReference type="RefSeq" id="NP_001077248.1">
    <property type="nucleotide sequence ID" value="NM_001083779.1"/>
</dbReference>
<dbReference type="FunCoup" id="A4IFJ1">
    <property type="interactions" value="62"/>
</dbReference>
<dbReference type="STRING" id="9913.ENSBTAP00000070670"/>
<dbReference type="PaxDb" id="9913-ENSBTAP00000005527"/>
<dbReference type="GeneID" id="617660"/>
<dbReference type="KEGG" id="bta:617660"/>
<dbReference type="CTD" id="646658"/>
<dbReference type="eggNOG" id="ENOG502QPQE">
    <property type="taxonomic scope" value="Eukaryota"/>
</dbReference>
<dbReference type="InParanoid" id="A4IFJ1"/>
<dbReference type="OrthoDB" id="10018862at2759"/>
<dbReference type="Proteomes" id="UP000009136">
    <property type="component" value="Unplaced"/>
</dbReference>
<dbReference type="GO" id="GO:0005794">
    <property type="term" value="C:Golgi apparatus"/>
    <property type="evidence" value="ECO:0007669"/>
    <property type="project" value="UniProtKB-SubCell"/>
</dbReference>
<dbReference type="GO" id="GO:0043231">
    <property type="term" value="C:intracellular membrane-bounded organelle"/>
    <property type="evidence" value="ECO:0000318"/>
    <property type="project" value="GO_Central"/>
</dbReference>
<dbReference type="GO" id="GO:0016020">
    <property type="term" value="C:membrane"/>
    <property type="evidence" value="ECO:0000318"/>
    <property type="project" value="GO_Central"/>
</dbReference>
<dbReference type="InterPro" id="IPR007593">
    <property type="entry name" value="CD225/Dispanin_fam"/>
</dbReference>
<dbReference type="PANTHER" id="PTHR14768:SF4">
    <property type="entry name" value="SYNAPSE DIFFERENTIATION-INDUCING GENE PROTEIN 1-LIKE"/>
    <property type="match status" value="1"/>
</dbReference>
<dbReference type="PANTHER" id="PTHR14768">
    <property type="entry name" value="UPF0338 PROTEIN"/>
    <property type="match status" value="1"/>
</dbReference>
<dbReference type="Pfam" id="PF04505">
    <property type="entry name" value="CD225"/>
    <property type="match status" value="1"/>
</dbReference>
<reference key="1">
    <citation type="submission" date="2007-03" db="EMBL/GenBank/DDBJ databases">
        <authorList>
            <consortium name="NIH - Mammalian Gene Collection (MGC) project"/>
        </authorList>
    </citation>
    <scope>NUCLEOTIDE SEQUENCE [LARGE SCALE MRNA]</scope>
    <source>
        <strain>Hereford</strain>
        <tissue>Basal ganglia</tissue>
    </source>
</reference>
<reference key="2">
    <citation type="journal article" date="2012" name="PLoS ONE">
        <title>The dispanins: a novel gene family of ancient origin that contains 14 human members.</title>
        <authorList>
            <person name="Sallman Almen M."/>
            <person name="Bringeland N."/>
            <person name="Fredriksson R."/>
            <person name="Schioth H.B."/>
        </authorList>
    </citation>
    <scope>GENE FAMILY</scope>
</reference>
<name>SYN1L_BOVIN</name>
<sequence length="238" mass="25822">MESLSELQNPLLPRSPTHLHGPYPYPEASPAWPCREKIYSYLLGGAGPAHAHQLLDPGSLQLAVEAWYRPSCLLGRDKVKEPRPGSCETSFTEGREPPAGPTERSTEPGQAEEDVAIQTVSYGVQEEFQGQEGDPEEEESDATSTESESEDNFLTLPPRDHLGLTIFSMLCCFWPLGIAAFYFSQGTSKAISKGDFRLANTTSRRALFLATLSIAVGAGLYVAVVVALAAYMSQNGHS</sequence>
<keyword id="KW-0333">Golgi apparatus</keyword>
<keyword id="KW-0472">Membrane</keyword>
<keyword id="KW-1185">Reference proteome</keyword>
<keyword id="KW-0812">Transmembrane</keyword>
<keyword id="KW-1133">Transmembrane helix</keyword>
<evidence type="ECO:0000250" key="1"/>
<evidence type="ECO:0000255" key="2"/>
<evidence type="ECO:0000256" key="3">
    <source>
        <dbReference type="SAM" id="MobiDB-lite"/>
    </source>
</evidence>
<evidence type="ECO:0000305" key="4"/>
<feature type="chain" id="PRO_0000332724" description="Synapse differentiation-inducing gene protein 1-like">
    <location>
        <begin position="1"/>
        <end position="238"/>
    </location>
</feature>
<feature type="topological domain" description="Extracellular" evidence="2">
    <location>
        <begin position="1"/>
        <end position="162"/>
    </location>
</feature>
<feature type="transmembrane region" description="Helical" evidence="2">
    <location>
        <begin position="163"/>
        <end position="183"/>
    </location>
</feature>
<feature type="topological domain" description="Cytoplasmic" evidence="2">
    <location>
        <begin position="184"/>
        <end position="205"/>
    </location>
</feature>
<feature type="transmembrane region" description="Helical" evidence="2">
    <location>
        <begin position="206"/>
        <end position="226"/>
    </location>
</feature>
<feature type="topological domain" description="Extracellular" evidence="2">
    <location>
        <begin position="227"/>
        <end position="238"/>
    </location>
</feature>
<feature type="region of interest" description="Disordered" evidence="3">
    <location>
        <begin position="1"/>
        <end position="24"/>
    </location>
</feature>
<feature type="region of interest" description="Disordered" evidence="3">
    <location>
        <begin position="78"/>
        <end position="111"/>
    </location>
</feature>
<feature type="region of interest" description="Disordered" evidence="3">
    <location>
        <begin position="126"/>
        <end position="155"/>
    </location>
</feature>
<feature type="compositionally biased region" description="Acidic residues" evidence="3">
    <location>
        <begin position="133"/>
        <end position="151"/>
    </location>
</feature>
<organism>
    <name type="scientific">Bos taurus</name>
    <name type="common">Bovine</name>
    <dbReference type="NCBI Taxonomy" id="9913"/>
    <lineage>
        <taxon>Eukaryota</taxon>
        <taxon>Metazoa</taxon>
        <taxon>Chordata</taxon>
        <taxon>Craniata</taxon>
        <taxon>Vertebrata</taxon>
        <taxon>Euteleostomi</taxon>
        <taxon>Mammalia</taxon>
        <taxon>Eutheria</taxon>
        <taxon>Laurasiatheria</taxon>
        <taxon>Artiodactyla</taxon>
        <taxon>Ruminantia</taxon>
        <taxon>Pecora</taxon>
        <taxon>Bovidae</taxon>
        <taxon>Bovinae</taxon>
        <taxon>Bos</taxon>
    </lineage>
</organism>
<gene>
    <name type="primary">SYNDIG1L</name>
    <name type="synonym">TMEM90A</name>
</gene>